<proteinExistence type="inferred from homology"/>
<accession>Q68XG8</accession>
<comment type="function">
    <text evidence="1">Chaperone involved in the maturation of iron-sulfur cluster-containing proteins. Has a low intrinsic ATPase activity which is markedly stimulated by HscB.</text>
</comment>
<comment type="similarity">
    <text evidence="1">Belongs to the heat shock protein 70 family.</text>
</comment>
<organism>
    <name type="scientific">Rickettsia typhi (strain ATCC VR-144 / Wilmington)</name>
    <dbReference type="NCBI Taxonomy" id="257363"/>
    <lineage>
        <taxon>Bacteria</taxon>
        <taxon>Pseudomonadati</taxon>
        <taxon>Pseudomonadota</taxon>
        <taxon>Alphaproteobacteria</taxon>
        <taxon>Rickettsiales</taxon>
        <taxon>Rickettsiaceae</taxon>
        <taxon>Rickettsieae</taxon>
        <taxon>Rickettsia</taxon>
        <taxon>typhus group</taxon>
    </lineage>
</organism>
<reference key="1">
    <citation type="journal article" date="2004" name="J. Bacteriol.">
        <title>Complete genome sequence of Rickettsia typhi and comparison with sequences of other Rickettsiae.</title>
        <authorList>
            <person name="McLeod M.P."/>
            <person name="Qin X."/>
            <person name="Karpathy S.E."/>
            <person name="Gioia J."/>
            <person name="Highlander S.K."/>
            <person name="Fox G.E."/>
            <person name="McNeill T.Z."/>
            <person name="Jiang H."/>
            <person name="Muzny D."/>
            <person name="Jacob L.S."/>
            <person name="Hawes A.C."/>
            <person name="Sodergren E."/>
            <person name="Gill R."/>
            <person name="Hume J."/>
            <person name="Morgan M."/>
            <person name="Fan G."/>
            <person name="Amin A.G."/>
            <person name="Gibbs R.A."/>
            <person name="Hong C."/>
            <person name="Yu X.-J."/>
            <person name="Walker D.H."/>
            <person name="Weinstock G.M."/>
        </authorList>
    </citation>
    <scope>NUCLEOTIDE SEQUENCE [LARGE SCALE GENOMIC DNA]</scope>
    <source>
        <strain>ATCC VR-144 / Wilmington</strain>
    </source>
</reference>
<name>HSCA_RICTY</name>
<evidence type="ECO:0000255" key="1">
    <source>
        <dbReference type="HAMAP-Rule" id="MF_00679"/>
    </source>
</evidence>
<gene>
    <name evidence="1" type="primary">hscA</name>
    <name type="ordered locus">RT0190</name>
</gene>
<sequence length="586" mass="65323">MQIIEITEPKQTDCQQKLQIAVGIDFGTTNSLIAIATNRKVNIIKSKGDKELIPTTIDFINEDLIIGNNKGLRSIKRLFGKTLKEILNTKTLFALVKDYLDINSSELKLNFANKKMRIAEIAAEVFIYLKNQAEKQLKNNITKAVITIPAHFNDTARGEIMLAAKIAGFEVLRLIAEPTAAAYAYGLNRNQTGRYLVYDLGGGTFDVSILNIQEGIFQVIATNGDNMLGGDDIDVVITQYICNKFDLPNSSETLQLAKKAKETLTYKESFNNDIISINKQTLEQLIFPLVKHTINITQECLEQSGNPNIDGVILVGGTTRIPLIKDELYKAFKINILSDIDPDKAVVCGAALQAENLIAPHTNSLLIDVVPLSLGIELYGGIVEKIIMRNTPIPIAVIKEFTTYADNQTGIQFHILQGEREMAADCRSLARFELKGLPPMKAGNIRAEVTFAIDADGILSISAYEKISNISHTIEVKPNHGIDKTEIEIMLENAYKNASIDYTTRLLQEEIIETEALISNIERSIIELTTLLSESEISIINALFDNIKYAVQTRDQTLIKHSIKEFKSKIKNIWIQNIININDLRK</sequence>
<protein>
    <recommendedName>
        <fullName evidence="1">Chaperone protein HscA homolog</fullName>
    </recommendedName>
</protein>
<feature type="chain" id="PRO_0000078645" description="Chaperone protein HscA homolog">
    <location>
        <begin position="1"/>
        <end position="586"/>
    </location>
</feature>
<keyword id="KW-0067">ATP-binding</keyword>
<keyword id="KW-0143">Chaperone</keyword>
<keyword id="KW-0547">Nucleotide-binding</keyword>
<dbReference type="EMBL" id="AE017197">
    <property type="protein sequence ID" value="AAU03674.1"/>
    <property type="molecule type" value="Genomic_DNA"/>
</dbReference>
<dbReference type="RefSeq" id="WP_011190661.1">
    <property type="nucleotide sequence ID" value="NC_006142.1"/>
</dbReference>
<dbReference type="SMR" id="Q68XG8"/>
<dbReference type="KEGG" id="rty:RT0190"/>
<dbReference type="eggNOG" id="COG0443">
    <property type="taxonomic scope" value="Bacteria"/>
</dbReference>
<dbReference type="HOGENOM" id="CLU_005965_0_0_5"/>
<dbReference type="OrthoDB" id="9766019at2"/>
<dbReference type="Proteomes" id="UP000000604">
    <property type="component" value="Chromosome"/>
</dbReference>
<dbReference type="GO" id="GO:0005524">
    <property type="term" value="F:ATP binding"/>
    <property type="evidence" value="ECO:0007669"/>
    <property type="project" value="UniProtKB-KW"/>
</dbReference>
<dbReference type="GO" id="GO:0016887">
    <property type="term" value="F:ATP hydrolysis activity"/>
    <property type="evidence" value="ECO:0007669"/>
    <property type="project" value="UniProtKB-UniRule"/>
</dbReference>
<dbReference type="GO" id="GO:0140662">
    <property type="term" value="F:ATP-dependent protein folding chaperone"/>
    <property type="evidence" value="ECO:0007669"/>
    <property type="project" value="InterPro"/>
</dbReference>
<dbReference type="GO" id="GO:0051082">
    <property type="term" value="F:unfolded protein binding"/>
    <property type="evidence" value="ECO:0007669"/>
    <property type="project" value="InterPro"/>
</dbReference>
<dbReference type="GO" id="GO:0016226">
    <property type="term" value="P:iron-sulfur cluster assembly"/>
    <property type="evidence" value="ECO:0007669"/>
    <property type="project" value="InterPro"/>
</dbReference>
<dbReference type="Gene3D" id="1.20.1270.10">
    <property type="match status" value="1"/>
</dbReference>
<dbReference type="Gene3D" id="3.30.420.40">
    <property type="match status" value="2"/>
</dbReference>
<dbReference type="Gene3D" id="3.90.640.10">
    <property type="entry name" value="Actin, Chain A, domain 4"/>
    <property type="match status" value="1"/>
</dbReference>
<dbReference type="Gene3D" id="2.60.34.10">
    <property type="entry name" value="Substrate Binding Domain Of DNAk, Chain A, domain 1"/>
    <property type="match status" value="1"/>
</dbReference>
<dbReference type="HAMAP" id="MF_00679">
    <property type="entry name" value="HscA"/>
    <property type="match status" value="1"/>
</dbReference>
<dbReference type="InterPro" id="IPR043129">
    <property type="entry name" value="ATPase_NBD"/>
</dbReference>
<dbReference type="InterPro" id="IPR018181">
    <property type="entry name" value="Heat_shock_70_CS"/>
</dbReference>
<dbReference type="InterPro" id="IPR029048">
    <property type="entry name" value="HSP70_C_sf"/>
</dbReference>
<dbReference type="InterPro" id="IPR029047">
    <property type="entry name" value="HSP70_peptide-bd_sf"/>
</dbReference>
<dbReference type="InterPro" id="IPR013126">
    <property type="entry name" value="Hsp_70_fam"/>
</dbReference>
<dbReference type="InterPro" id="IPR010236">
    <property type="entry name" value="ISC_FeS_clus_asmbl_HscA"/>
</dbReference>
<dbReference type="NCBIfam" id="NF002399">
    <property type="entry name" value="PRK01433.1"/>
    <property type="match status" value="1"/>
</dbReference>
<dbReference type="PANTHER" id="PTHR19375">
    <property type="entry name" value="HEAT SHOCK PROTEIN 70KDA"/>
    <property type="match status" value="1"/>
</dbReference>
<dbReference type="Pfam" id="PF00012">
    <property type="entry name" value="HSP70"/>
    <property type="match status" value="1"/>
</dbReference>
<dbReference type="PRINTS" id="PR00301">
    <property type="entry name" value="HEATSHOCK70"/>
</dbReference>
<dbReference type="SUPFAM" id="SSF53067">
    <property type="entry name" value="Actin-like ATPase domain"/>
    <property type="match status" value="2"/>
</dbReference>
<dbReference type="SUPFAM" id="SSF100934">
    <property type="entry name" value="Heat shock protein 70kD (HSP70), C-terminal subdomain"/>
    <property type="match status" value="1"/>
</dbReference>
<dbReference type="SUPFAM" id="SSF100920">
    <property type="entry name" value="Heat shock protein 70kD (HSP70), peptide-binding domain"/>
    <property type="match status" value="1"/>
</dbReference>
<dbReference type="PROSITE" id="PS00329">
    <property type="entry name" value="HSP70_2"/>
    <property type="match status" value="1"/>
</dbReference>
<dbReference type="PROSITE" id="PS01036">
    <property type="entry name" value="HSP70_3"/>
    <property type="match status" value="1"/>
</dbReference>